<proteinExistence type="inferred from homology"/>
<sequence length="145" mass="15163">MKAKHQRLILAVAALCGVAGAGVLAASALRDEAAYFRTPVEIAGGKAAVGEAMRLGGMVAKGSIVRQADGLTIRFVATDGQASVPVEYTGIVPDLFGEESGMIADGRMRADGTFVADRILAKHDERYMPPQMGEMPKNMKAAVEG</sequence>
<organism>
    <name type="scientific">Sphingopyxis alaskensis (strain DSM 13593 / LMG 18877 / RB2256)</name>
    <name type="common">Sphingomonas alaskensis</name>
    <dbReference type="NCBI Taxonomy" id="317655"/>
    <lineage>
        <taxon>Bacteria</taxon>
        <taxon>Pseudomonadati</taxon>
        <taxon>Pseudomonadota</taxon>
        <taxon>Alphaproteobacteria</taxon>
        <taxon>Sphingomonadales</taxon>
        <taxon>Sphingomonadaceae</taxon>
        <taxon>Sphingopyxis</taxon>
    </lineage>
</organism>
<gene>
    <name evidence="1" type="primary">ccmE</name>
    <name evidence="1" type="synonym">cycJ</name>
    <name type="ordered locus">Sala_1517</name>
</gene>
<feature type="chain" id="PRO_1000070865" description="Cytochrome c-type biogenesis protein CcmE">
    <location>
        <begin position="1"/>
        <end position="145"/>
    </location>
</feature>
<feature type="topological domain" description="Cytoplasmic" evidence="1">
    <location>
        <begin position="1"/>
        <end position="7"/>
    </location>
</feature>
<feature type="transmembrane region" description="Helical; Signal-anchor for type II membrane protein" evidence="1">
    <location>
        <begin position="8"/>
        <end position="28"/>
    </location>
</feature>
<feature type="topological domain" description="Periplasmic" evidence="1">
    <location>
        <begin position="29"/>
        <end position="145"/>
    </location>
</feature>
<feature type="binding site" description="covalent" evidence="1">
    <location>
        <position position="123"/>
    </location>
    <ligand>
        <name>heme</name>
        <dbReference type="ChEBI" id="CHEBI:30413"/>
    </ligand>
</feature>
<feature type="binding site" description="axial binding residue" evidence="1">
    <location>
        <position position="127"/>
    </location>
    <ligand>
        <name>heme</name>
        <dbReference type="ChEBI" id="CHEBI:30413"/>
    </ligand>
    <ligandPart>
        <name>Fe</name>
        <dbReference type="ChEBI" id="CHEBI:18248"/>
    </ligandPart>
</feature>
<accession>Q1GSZ2</accession>
<protein>
    <recommendedName>
        <fullName evidence="1">Cytochrome c-type biogenesis protein CcmE</fullName>
    </recommendedName>
    <alternativeName>
        <fullName evidence="1">Cytochrome c maturation protein E</fullName>
    </alternativeName>
    <alternativeName>
        <fullName evidence="1">Heme chaperone CcmE</fullName>
    </alternativeName>
</protein>
<keyword id="KW-0997">Cell inner membrane</keyword>
<keyword id="KW-1003">Cell membrane</keyword>
<keyword id="KW-0201">Cytochrome c-type biogenesis</keyword>
<keyword id="KW-0349">Heme</keyword>
<keyword id="KW-0408">Iron</keyword>
<keyword id="KW-0472">Membrane</keyword>
<keyword id="KW-0479">Metal-binding</keyword>
<keyword id="KW-1185">Reference proteome</keyword>
<keyword id="KW-0735">Signal-anchor</keyword>
<keyword id="KW-0812">Transmembrane</keyword>
<keyword id="KW-1133">Transmembrane helix</keyword>
<dbReference type="EMBL" id="CP000356">
    <property type="protein sequence ID" value="ABF53230.1"/>
    <property type="molecule type" value="Genomic_DNA"/>
</dbReference>
<dbReference type="RefSeq" id="WP_011541810.1">
    <property type="nucleotide sequence ID" value="NC_008048.1"/>
</dbReference>
<dbReference type="SMR" id="Q1GSZ2"/>
<dbReference type="STRING" id="317655.Sala_1517"/>
<dbReference type="KEGG" id="sal:Sala_1517"/>
<dbReference type="eggNOG" id="COG2332">
    <property type="taxonomic scope" value="Bacteria"/>
</dbReference>
<dbReference type="HOGENOM" id="CLU_079503_1_1_5"/>
<dbReference type="OrthoDB" id="9793584at2"/>
<dbReference type="Proteomes" id="UP000006578">
    <property type="component" value="Chromosome"/>
</dbReference>
<dbReference type="GO" id="GO:0005886">
    <property type="term" value="C:plasma membrane"/>
    <property type="evidence" value="ECO:0007669"/>
    <property type="project" value="UniProtKB-SubCell"/>
</dbReference>
<dbReference type="GO" id="GO:0020037">
    <property type="term" value="F:heme binding"/>
    <property type="evidence" value="ECO:0007669"/>
    <property type="project" value="InterPro"/>
</dbReference>
<dbReference type="GO" id="GO:0046872">
    <property type="term" value="F:metal ion binding"/>
    <property type="evidence" value="ECO:0007669"/>
    <property type="project" value="UniProtKB-KW"/>
</dbReference>
<dbReference type="GO" id="GO:0017004">
    <property type="term" value="P:cytochrome complex assembly"/>
    <property type="evidence" value="ECO:0007669"/>
    <property type="project" value="UniProtKB-KW"/>
</dbReference>
<dbReference type="Gene3D" id="2.40.50.140">
    <property type="entry name" value="Nucleic acid-binding proteins"/>
    <property type="match status" value="1"/>
</dbReference>
<dbReference type="HAMAP" id="MF_01959">
    <property type="entry name" value="CcmE"/>
    <property type="match status" value="1"/>
</dbReference>
<dbReference type="InterPro" id="IPR004329">
    <property type="entry name" value="CcmE"/>
</dbReference>
<dbReference type="InterPro" id="IPR036127">
    <property type="entry name" value="CcmE-like_sf"/>
</dbReference>
<dbReference type="InterPro" id="IPR012340">
    <property type="entry name" value="NA-bd_OB-fold"/>
</dbReference>
<dbReference type="NCBIfam" id="NF009727">
    <property type="entry name" value="PRK13254.1-1"/>
    <property type="match status" value="1"/>
</dbReference>
<dbReference type="NCBIfam" id="NF009731">
    <property type="entry name" value="PRK13254.1-5"/>
    <property type="match status" value="1"/>
</dbReference>
<dbReference type="PANTHER" id="PTHR34128">
    <property type="entry name" value="CYTOCHROME C-TYPE BIOGENESIS PROTEIN CCME HOMOLOG, MITOCHONDRIAL"/>
    <property type="match status" value="1"/>
</dbReference>
<dbReference type="PANTHER" id="PTHR34128:SF2">
    <property type="entry name" value="CYTOCHROME C-TYPE BIOGENESIS PROTEIN CCME HOMOLOG, MITOCHONDRIAL"/>
    <property type="match status" value="1"/>
</dbReference>
<dbReference type="Pfam" id="PF03100">
    <property type="entry name" value="CcmE"/>
    <property type="match status" value="1"/>
</dbReference>
<dbReference type="SUPFAM" id="SSF82093">
    <property type="entry name" value="Heme chaperone CcmE"/>
    <property type="match status" value="1"/>
</dbReference>
<reference key="1">
    <citation type="journal article" date="2009" name="Proc. Natl. Acad. Sci. U.S.A.">
        <title>The genomic basis of trophic strategy in marine bacteria.</title>
        <authorList>
            <person name="Lauro F.M."/>
            <person name="McDougald D."/>
            <person name="Thomas T."/>
            <person name="Williams T.J."/>
            <person name="Egan S."/>
            <person name="Rice S."/>
            <person name="DeMaere M.Z."/>
            <person name="Ting L."/>
            <person name="Ertan H."/>
            <person name="Johnson J."/>
            <person name="Ferriera S."/>
            <person name="Lapidus A."/>
            <person name="Anderson I."/>
            <person name="Kyrpides N."/>
            <person name="Munk A.C."/>
            <person name="Detter C."/>
            <person name="Han C.S."/>
            <person name="Brown M.V."/>
            <person name="Robb F.T."/>
            <person name="Kjelleberg S."/>
            <person name="Cavicchioli R."/>
        </authorList>
    </citation>
    <scope>NUCLEOTIDE SEQUENCE [LARGE SCALE GENOMIC DNA]</scope>
    <source>
        <strain>DSM 13593 / LMG 18877 / RB2256</strain>
    </source>
</reference>
<name>CCME_SPHAL</name>
<evidence type="ECO:0000255" key="1">
    <source>
        <dbReference type="HAMAP-Rule" id="MF_01959"/>
    </source>
</evidence>
<comment type="function">
    <text evidence="1">Heme chaperone required for the biogenesis of c-type cytochromes. Transiently binds heme delivered by CcmC and transfers the heme to apo-cytochromes in a process facilitated by CcmF and CcmH.</text>
</comment>
<comment type="subcellular location">
    <subcellularLocation>
        <location evidence="1">Cell inner membrane</location>
        <topology evidence="1">Single-pass type II membrane protein</topology>
        <orientation evidence="1">Periplasmic side</orientation>
    </subcellularLocation>
</comment>
<comment type="similarity">
    <text evidence="1">Belongs to the CcmE/CycJ family.</text>
</comment>